<reference key="1">
    <citation type="journal article" date="2001" name="Proc. Natl. Acad. Sci. U.S.A.">
        <title>Complete genome sequence of an M1 strain of Streptococcus pyogenes.</title>
        <authorList>
            <person name="Ferretti J.J."/>
            <person name="McShan W.M."/>
            <person name="Ajdic D.J."/>
            <person name="Savic D.J."/>
            <person name="Savic G."/>
            <person name="Lyon K."/>
            <person name="Primeaux C."/>
            <person name="Sezate S."/>
            <person name="Suvorov A.N."/>
            <person name="Kenton S."/>
            <person name="Lai H.S."/>
            <person name="Lin S.P."/>
            <person name="Qian Y."/>
            <person name="Jia H.G."/>
            <person name="Najar F.Z."/>
            <person name="Ren Q."/>
            <person name="Zhu H."/>
            <person name="Song L."/>
            <person name="White J."/>
            <person name="Yuan X."/>
            <person name="Clifton S.W."/>
            <person name="Roe B.A."/>
            <person name="McLaughlin R.E."/>
        </authorList>
    </citation>
    <scope>NUCLEOTIDE SEQUENCE [LARGE SCALE GENOMIC DNA]</scope>
    <source>
        <strain>ATCC 700294 / SF370 / Serotype M1</strain>
    </source>
</reference>
<reference key="2">
    <citation type="journal article" date="2005" name="J. Infect. Dis.">
        <title>Evolutionary origin and emergence of a highly successful clone of serotype M1 group A Streptococcus involved multiple horizontal gene transfer events.</title>
        <authorList>
            <person name="Sumby P."/>
            <person name="Porcella S.F."/>
            <person name="Madrigal A.G."/>
            <person name="Barbian K.D."/>
            <person name="Virtaneva K."/>
            <person name="Ricklefs S.M."/>
            <person name="Sturdevant D.E."/>
            <person name="Graham M.R."/>
            <person name="Vuopio-Varkila J."/>
            <person name="Hoe N.P."/>
            <person name="Musser J.M."/>
        </authorList>
    </citation>
    <scope>NUCLEOTIDE SEQUENCE [LARGE SCALE GENOMIC DNA]</scope>
    <source>
        <strain>ATCC BAA-947 / MGAS5005 / Serotype M1</strain>
    </source>
</reference>
<dbReference type="EMBL" id="AE004092">
    <property type="protein sequence ID" value="AAK34553.1"/>
    <property type="molecule type" value="Genomic_DNA"/>
</dbReference>
<dbReference type="EMBL" id="CP000017">
    <property type="protein sequence ID" value="AAZ52173.1"/>
    <property type="molecule type" value="Genomic_DNA"/>
</dbReference>
<dbReference type="RefSeq" id="NP_269832.1">
    <property type="nucleotide sequence ID" value="NC_002737.2"/>
</dbReference>
<dbReference type="SMR" id="P66599"/>
<dbReference type="PaxDb" id="1314-HKU360_01677"/>
<dbReference type="KEGG" id="spy:SPy_1831"/>
<dbReference type="KEGG" id="spz:M5005_Spy1555"/>
<dbReference type="PATRIC" id="fig|160490.10.peg.1590"/>
<dbReference type="HOGENOM" id="CLU_113441_5_3_9"/>
<dbReference type="OMA" id="AYPIQHK"/>
<dbReference type="PRO" id="PR:P66599"/>
<dbReference type="Proteomes" id="UP000000750">
    <property type="component" value="Chromosome"/>
</dbReference>
<dbReference type="GO" id="GO:0005737">
    <property type="term" value="C:cytoplasm"/>
    <property type="evidence" value="ECO:0007669"/>
    <property type="project" value="UniProtKB-ARBA"/>
</dbReference>
<dbReference type="GO" id="GO:1990904">
    <property type="term" value="C:ribonucleoprotein complex"/>
    <property type="evidence" value="ECO:0007669"/>
    <property type="project" value="UniProtKB-KW"/>
</dbReference>
<dbReference type="GO" id="GO:0005840">
    <property type="term" value="C:ribosome"/>
    <property type="evidence" value="ECO:0007669"/>
    <property type="project" value="UniProtKB-KW"/>
</dbReference>
<dbReference type="GO" id="GO:0070181">
    <property type="term" value="F:small ribosomal subunit rRNA binding"/>
    <property type="evidence" value="ECO:0007669"/>
    <property type="project" value="TreeGrafter"/>
</dbReference>
<dbReference type="GO" id="GO:0003735">
    <property type="term" value="F:structural constituent of ribosome"/>
    <property type="evidence" value="ECO:0007669"/>
    <property type="project" value="InterPro"/>
</dbReference>
<dbReference type="GO" id="GO:0006412">
    <property type="term" value="P:translation"/>
    <property type="evidence" value="ECO:0007669"/>
    <property type="project" value="UniProtKB-UniRule"/>
</dbReference>
<dbReference type="CDD" id="cd00473">
    <property type="entry name" value="bS6"/>
    <property type="match status" value="1"/>
</dbReference>
<dbReference type="FunFam" id="3.30.70.60:FF:000002">
    <property type="entry name" value="30S ribosomal protein S6"/>
    <property type="match status" value="1"/>
</dbReference>
<dbReference type="Gene3D" id="3.30.70.60">
    <property type="match status" value="1"/>
</dbReference>
<dbReference type="HAMAP" id="MF_00360">
    <property type="entry name" value="Ribosomal_bS6"/>
    <property type="match status" value="1"/>
</dbReference>
<dbReference type="InterPro" id="IPR000529">
    <property type="entry name" value="Ribosomal_bS6"/>
</dbReference>
<dbReference type="InterPro" id="IPR035980">
    <property type="entry name" value="Ribosomal_bS6_sf"/>
</dbReference>
<dbReference type="InterPro" id="IPR020814">
    <property type="entry name" value="Ribosomal_S6_plastid/chlpt"/>
</dbReference>
<dbReference type="InterPro" id="IPR014717">
    <property type="entry name" value="Transl_elong_EF1B/ribsomal_bS6"/>
</dbReference>
<dbReference type="NCBIfam" id="TIGR00166">
    <property type="entry name" value="S6"/>
    <property type="match status" value="1"/>
</dbReference>
<dbReference type="PANTHER" id="PTHR21011">
    <property type="entry name" value="MITOCHONDRIAL 28S RIBOSOMAL PROTEIN S6"/>
    <property type="match status" value="1"/>
</dbReference>
<dbReference type="PANTHER" id="PTHR21011:SF1">
    <property type="entry name" value="SMALL RIBOSOMAL SUBUNIT PROTEIN BS6M"/>
    <property type="match status" value="1"/>
</dbReference>
<dbReference type="Pfam" id="PF01250">
    <property type="entry name" value="Ribosomal_S6"/>
    <property type="match status" value="1"/>
</dbReference>
<dbReference type="SUPFAM" id="SSF54995">
    <property type="entry name" value="Ribosomal protein S6"/>
    <property type="match status" value="1"/>
</dbReference>
<evidence type="ECO:0000255" key="1">
    <source>
        <dbReference type="HAMAP-Rule" id="MF_00360"/>
    </source>
</evidence>
<evidence type="ECO:0000305" key="2"/>
<name>RS6_STRP1</name>
<accession>P66599</accession>
<accession>Q48WV2</accession>
<accession>Q99Y79</accession>
<keyword id="KW-1185">Reference proteome</keyword>
<keyword id="KW-0687">Ribonucleoprotein</keyword>
<keyword id="KW-0689">Ribosomal protein</keyword>
<keyword id="KW-0694">RNA-binding</keyword>
<keyword id="KW-0699">rRNA-binding</keyword>
<organism>
    <name type="scientific">Streptococcus pyogenes serotype M1</name>
    <dbReference type="NCBI Taxonomy" id="301447"/>
    <lineage>
        <taxon>Bacteria</taxon>
        <taxon>Bacillati</taxon>
        <taxon>Bacillota</taxon>
        <taxon>Bacilli</taxon>
        <taxon>Lactobacillales</taxon>
        <taxon>Streptococcaceae</taxon>
        <taxon>Streptococcus</taxon>
    </lineage>
</organism>
<feature type="chain" id="PRO_0000176850" description="Small ribosomal subunit protein bS6">
    <location>
        <begin position="1"/>
        <end position="96"/>
    </location>
</feature>
<comment type="function">
    <text evidence="1">Binds together with bS18 to 16S ribosomal RNA.</text>
</comment>
<comment type="similarity">
    <text evidence="1">Belongs to the bacterial ribosomal protein bS6 family.</text>
</comment>
<protein>
    <recommendedName>
        <fullName evidence="1">Small ribosomal subunit protein bS6</fullName>
    </recommendedName>
    <alternativeName>
        <fullName evidence="2">30S ribosomal protein S6</fullName>
    </alternativeName>
</protein>
<gene>
    <name evidence="1" type="primary">rpsF</name>
    <name type="ordered locus">SPy_1831</name>
    <name type="ordered locus">M5005_Spy1555</name>
</gene>
<proteinExistence type="inferred from homology"/>
<sequence>MAKYEILYIIRPNIEEEAKNALVARFDSILTDNGATVVESKDWEKRRLAYEINDFREGLYHIVNLEATDAAALNEFDRLSKINGDILRHMIVKLDA</sequence>